<accession>O30827</accession>
<proteinExistence type="inferred from homology"/>
<protein>
    <recommendedName>
        <fullName>2-(5''-triphosphoribosyl)-3'-dephosphocoenzyme-A synthase</fullName>
        <shortName>2-(5''-triphosphoribosyl)-3'-dephospho-CoA synthase</shortName>
        <ecNumber>2.4.2.52</ecNumber>
    </recommendedName>
</protein>
<evidence type="ECO:0000250" key="1"/>
<evidence type="ECO:0000305" key="2"/>
<name>CITG_HAEDU</name>
<comment type="function">
    <text evidence="1">Catalyzes the formation of 2-(5''-triphosphoribosyl)-3'-dephosphocoenzyme-A, the precursor of the prosthetic group of the holo-acyl carrier protein (gamma chain) of citrate lyase, from ATP and dephospho-CoA.</text>
</comment>
<comment type="catalytic activity">
    <reaction>
        <text>3'-dephospho-CoA + ATP = 2'-(5''-triphospho-alpha-D-ribosyl)-3'-dephospho-CoA + adenine</text>
        <dbReference type="Rhea" id="RHEA:15117"/>
        <dbReference type="ChEBI" id="CHEBI:16708"/>
        <dbReference type="ChEBI" id="CHEBI:30616"/>
        <dbReference type="ChEBI" id="CHEBI:57328"/>
        <dbReference type="ChEBI" id="CHEBI:61378"/>
        <dbReference type="EC" id="2.4.2.52"/>
    </reaction>
</comment>
<comment type="similarity">
    <text evidence="2">Belongs to the CitG/MdcB family.</text>
</comment>
<comment type="caution">
    <text evidence="2">This protein seems to consist of a CitG domain with an incomplete N-terminal CitX region. The start site is approximate as there is similarity downstream up to the C-terminal codon of the adjacent sodA gene.</text>
</comment>
<comment type="sequence caution" evidence="2">
    <conflict type="erroneous initiation">
        <sequence resource="EMBL-CDS" id="AAP96080"/>
    </conflict>
</comment>
<sequence length="323" mass="35978">MCAESAKICARSRRHSIDDLLSEIHTRAQQYYFSEQIAELAYQALIKEARLTPKPGLVDSTNNGSHQDMSLSTFEQSAIALRPFFTQFVLMGIETTNLPDSHILSKIRPLGLQAEQAMFVATNQVNTHKGAIFAFGLVCTALGRHFSRWQNKMMSSPSFEISQDTTGISLISETVARFTQGITDELKNYSKNQPLTAGITLYQQYGFTGARGEAEKGFPLVQQAVVFILSQAESEMRWYWALLYLMANNNDTNIVHRGGINGLQFIQDEAHKRLGNAKNLQNANALMASLREFDDDCIARNLSPGGSADLLALTIFFLSLLYC</sequence>
<dbReference type="EC" id="2.4.2.52"/>
<dbReference type="EMBL" id="AF017750">
    <property type="protein sequence ID" value="AAC46220.1"/>
    <property type="molecule type" value="Genomic_DNA"/>
</dbReference>
<dbReference type="EMBL" id="AE017143">
    <property type="protein sequence ID" value="AAP96080.1"/>
    <property type="status" value="ALT_INIT"/>
    <property type="molecule type" value="Genomic_DNA"/>
</dbReference>
<dbReference type="RefSeq" id="WP_010945129.1">
    <property type="nucleotide sequence ID" value="NC_002940.2"/>
</dbReference>
<dbReference type="SMR" id="O30827"/>
<dbReference type="STRING" id="233412.HD_1245"/>
<dbReference type="KEGG" id="hdu:HD_1245"/>
<dbReference type="eggNOG" id="COG1767">
    <property type="taxonomic scope" value="Bacteria"/>
</dbReference>
<dbReference type="eggNOG" id="COG3697">
    <property type="taxonomic scope" value="Bacteria"/>
</dbReference>
<dbReference type="HOGENOM" id="CLU_048409_1_0_6"/>
<dbReference type="OrthoDB" id="114886at2"/>
<dbReference type="Proteomes" id="UP000001022">
    <property type="component" value="Chromosome"/>
</dbReference>
<dbReference type="GO" id="GO:0005524">
    <property type="term" value="F:ATP binding"/>
    <property type="evidence" value="ECO:0007669"/>
    <property type="project" value="UniProtKB-KW"/>
</dbReference>
<dbReference type="GO" id="GO:0046917">
    <property type="term" value="F:triphosphoribosyl-dephospho-CoA synthase activity"/>
    <property type="evidence" value="ECO:0007669"/>
    <property type="project" value="UniProtKB-UniRule"/>
</dbReference>
<dbReference type="GO" id="GO:0051191">
    <property type="term" value="P:prosthetic group biosynthetic process"/>
    <property type="evidence" value="ECO:0007669"/>
    <property type="project" value="TreeGrafter"/>
</dbReference>
<dbReference type="Gene3D" id="1.10.4200.10">
    <property type="entry name" value="Triphosphoribosyl-dephospho-CoA protein"/>
    <property type="match status" value="1"/>
</dbReference>
<dbReference type="HAMAP" id="MF_00397">
    <property type="entry name" value="CitG"/>
    <property type="match status" value="1"/>
</dbReference>
<dbReference type="InterPro" id="IPR002736">
    <property type="entry name" value="CitG"/>
</dbReference>
<dbReference type="InterPro" id="IPR017551">
    <property type="entry name" value="TriPribosyl-deP-CoA_syn_CitG"/>
</dbReference>
<dbReference type="NCBIfam" id="TIGR03125">
    <property type="entry name" value="citrate_citG"/>
    <property type="match status" value="1"/>
</dbReference>
<dbReference type="PANTHER" id="PTHR30201:SF2">
    <property type="entry name" value="2-(5''-TRIPHOSPHORIBOSYL)-3'-DEPHOSPHOCOENZYME-A SYNTHASE"/>
    <property type="match status" value="1"/>
</dbReference>
<dbReference type="PANTHER" id="PTHR30201">
    <property type="entry name" value="TRIPHOSPHORIBOSYL-DEPHOSPHO-COA SYNTHASE"/>
    <property type="match status" value="1"/>
</dbReference>
<dbReference type="Pfam" id="PF01874">
    <property type="entry name" value="CitG"/>
    <property type="match status" value="1"/>
</dbReference>
<keyword id="KW-0067">ATP-binding</keyword>
<keyword id="KW-0547">Nucleotide-binding</keyword>
<keyword id="KW-1185">Reference proteome</keyword>
<keyword id="KW-0808">Transferase</keyword>
<reference key="1">
    <citation type="journal article" date="1998" name="Gene">
        <title>The sodA gene of Haemophilus ducreyi encodes a hydrogen peroxide-inhibitable superoxide dismutase.</title>
        <authorList>
            <person name="San Mateo L.R."/>
            <person name="Toffer K.L."/>
            <person name="Kawula T.H."/>
        </authorList>
    </citation>
    <scope>NUCLEOTIDE SEQUENCE [GENOMIC DNA]</scope>
    <source>
        <strain>35000HP / ATCC 700724</strain>
    </source>
</reference>
<reference key="2">
    <citation type="submission" date="2003-06" db="EMBL/GenBank/DDBJ databases">
        <title>The complete genome sequence of Haemophilus ducreyi.</title>
        <authorList>
            <person name="Munson R.S. Jr."/>
            <person name="Ray W.C."/>
            <person name="Mahairas G."/>
            <person name="Sabo P."/>
            <person name="Mungur R."/>
            <person name="Johnson L."/>
            <person name="Nguyen D."/>
            <person name="Wang J."/>
            <person name="Forst C."/>
            <person name="Hood L."/>
        </authorList>
    </citation>
    <scope>NUCLEOTIDE SEQUENCE [LARGE SCALE GENOMIC DNA]</scope>
    <source>
        <strain>35000HP / ATCC 700724</strain>
    </source>
</reference>
<organism>
    <name type="scientific">Haemophilus ducreyi (strain 35000HP / ATCC 700724)</name>
    <dbReference type="NCBI Taxonomy" id="233412"/>
    <lineage>
        <taxon>Bacteria</taxon>
        <taxon>Pseudomonadati</taxon>
        <taxon>Pseudomonadota</taxon>
        <taxon>Gammaproteobacteria</taxon>
        <taxon>Pasteurellales</taxon>
        <taxon>Pasteurellaceae</taxon>
        <taxon>Haemophilus</taxon>
    </lineage>
</organism>
<feature type="chain" id="PRO_0000214668" description="2-(5''-triphosphoribosyl)-3'-dephosphocoenzyme-A synthase">
    <location>
        <begin position="1"/>
        <end position="323"/>
    </location>
</feature>
<gene>
    <name type="primary">citG</name>
    <name type="ordered locus">HD_1245</name>
</gene>